<feature type="signal peptide" evidence="1">
    <location>
        <begin position="1"/>
        <end position="29"/>
    </location>
</feature>
<feature type="chain" id="PRO_0000015189" description="Immunoglobulin kappa chain variable 6-17">
    <location>
        <begin position="30"/>
        <end position="149"/>
    </location>
</feature>
<feature type="repeat">
    <location>
        <begin position="26"/>
        <end position="35"/>
    </location>
</feature>
<feature type="repeat">
    <location>
        <begin position="38"/>
        <end position="47"/>
    </location>
</feature>
<feature type="region of interest" description="Framework-1">
    <location>
        <begin position="42"/>
        <end position="64"/>
    </location>
</feature>
<feature type="region of interest" description="Complementarity-determining-1">
    <location>
        <begin position="65"/>
        <end position="75"/>
    </location>
</feature>
<feature type="region of interest" description="Framework-2">
    <location>
        <begin position="76"/>
        <end position="90"/>
    </location>
</feature>
<feature type="region of interest" description="Complementarity-determining-2">
    <location>
        <begin position="91"/>
        <end position="97"/>
    </location>
</feature>
<feature type="region of interest" description="Framework-3">
    <location>
        <begin position="98"/>
        <end position="129"/>
    </location>
</feature>
<feature type="region of interest" description="Complementarity-determining-3">
    <location>
        <begin position="130"/>
        <end position="138"/>
    </location>
</feature>
<feature type="region of interest" description="Framework-4">
    <location>
        <begin position="139"/>
        <end position="148"/>
    </location>
</feature>
<feature type="non-terminal residue">
    <location>
        <position position="149"/>
    </location>
</feature>
<sequence length="149" mass="16434">MHHTSMGIKMESQIQVFVFVFLWLSGVDGDIVMTQFAGVDGDIVMTQSHKFMSTSVGDRVSITCKASQDVSTTVAWYQQKPGQSPKLLIYSASYRYTGVPDRFTGSGSGTDFTFTISSVQAEDLAVYYCQQHYSTPPTFGGGTKLEIKR</sequence>
<comment type="miscellaneous">
    <text>The mature chain has 12 additional residues at its amino end, due to a tandem duplication of 36 nucleotides after the codon for residue 36. Residue 42 corresponds to the N-terminal residue of typical kappa chains.</text>
</comment>
<organism>
    <name type="scientific">Mus musculus</name>
    <name type="common">Mouse</name>
    <dbReference type="NCBI Taxonomy" id="10090"/>
    <lineage>
        <taxon>Eukaryota</taxon>
        <taxon>Metazoa</taxon>
        <taxon>Chordata</taxon>
        <taxon>Craniata</taxon>
        <taxon>Vertebrata</taxon>
        <taxon>Euteleostomi</taxon>
        <taxon>Mammalia</taxon>
        <taxon>Eutheria</taxon>
        <taxon>Euarchontoglires</taxon>
        <taxon>Glires</taxon>
        <taxon>Rodentia</taxon>
        <taxon>Myomorpha</taxon>
        <taxon>Muroidea</taxon>
        <taxon>Muridae</taxon>
        <taxon>Murinae</taxon>
        <taxon>Mus</taxon>
        <taxon>Mus</taxon>
    </lineage>
</organism>
<accession>P01633</accession>
<proteinExistence type="evidence at protein level"/>
<reference key="1">
    <citation type="journal article" date="1982" name="Cell">
        <title>Functional significance and evolutionary development of the 5'-terminal regions of immunoglobulin variable-region genes.</title>
        <authorList>
            <person name="Kelley D.E."/>
            <person name="Coleclough C."/>
            <person name="Perry R.P."/>
        </authorList>
    </citation>
    <scope>NUCLEOTIDE SEQUENCE [GENOMIC DNA] OF 1-71</scope>
</reference>
<reference key="2">
    <citation type="journal article" date="1980" name="Can. J. Biochem.">
        <title>The variability, arrangement, and rearrangement of immunoglobulin genes.</title>
        <authorList>
            <person name="Rabbitts T.H."/>
            <person name="Hamlyn P.H."/>
            <person name="Matthyssens G."/>
            <person name="Roe B.A."/>
        </authorList>
    </citation>
    <scope>NUCLEOTIDE SEQUENCE [GENOMIC DNA] OF 41-149</scope>
</reference>
<reference key="3">
    <citation type="journal article" date="1978" name="Biochem. J.">
        <title>Sequence of the full-length immunoglobulin kappa-chain of mouse myeloma MPC 11.</title>
        <authorList>
            <person name="Smith G.P."/>
        </authorList>
    </citation>
    <scope>PROTEIN SEQUENCE OF 30-149</scope>
</reference>
<evidence type="ECO:0000269" key="1">
    <source>
    </source>
</evidence>
<evidence type="ECO:0000305" key="2"/>
<evidence type="ECO:0000312" key="3">
    <source>
        <dbReference type="MGI" id="MGI:1330833"/>
    </source>
</evidence>
<gene>
    <name evidence="3" type="primary">Igkv6-17</name>
    <name evidence="2" type="synonym">Igk-V19-17</name>
</gene>
<dbReference type="EMBL" id="J00561">
    <property type="protein sequence ID" value="AAA38776.1"/>
    <property type="molecule type" value="Genomic_DNA"/>
</dbReference>
<dbReference type="PIR" id="A90823">
    <property type="entry name" value="KVMS11"/>
</dbReference>
<dbReference type="PIR" id="PQ0265">
    <property type="entry name" value="PQ0265"/>
</dbReference>
<dbReference type="EMDB" id="EMD-0894"/>
<dbReference type="EMDB" id="EMD-15073"/>
<dbReference type="EMDB" id="EMD-21429"/>
<dbReference type="EMDB" id="EMD-23656"/>
<dbReference type="EMDB" id="EMD-23658"/>
<dbReference type="EMDB" id="EMD-25754"/>
<dbReference type="EMDB" id="EMD-25755"/>
<dbReference type="EMDB" id="EMD-26521"/>
<dbReference type="EMDB" id="EMD-26658"/>
<dbReference type="EMDB" id="EMD-26662"/>
<dbReference type="EMDB" id="EMD-26668"/>
<dbReference type="EMDB" id="EMD-29836"/>
<dbReference type="EMDB" id="EMD-31045"/>
<dbReference type="EMDB" id="EMD-31046"/>
<dbReference type="EMDB" id="EMD-32676"/>
<dbReference type="EMDB" id="EMD-32678"/>
<dbReference type="EMDB" id="EMD-33047"/>
<dbReference type="EMDB" id="EMD-33048"/>
<dbReference type="EMDB" id="EMD-33049"/>
<dbReference type="EMDB" id="EMD-33831"/>
<dbReference type="EMDB" id="EMD-35740"/>
<dbReference type="EMDB" id="EMD-35741"/>
<dbReference type="EMDB" id="EMD-37293"/>
<dbReference type="EMDB" id="EMD-37300"/>
<dbReference type="EMDB" id="EMD-37304"/>
<dbReference type="EMDB" id="EMD-37305"/>
<dbReference type="EMDB" id="EMD-39261"/>
<dbReference type="EMDB" id="EMD-39263"/>
<dbReference type="EMDB" id="EMD-39264"/>
<dbReference type="EMDB" id="EMD-61622"/>
<dbReference type="EMDB" id="EMD-62925"/>
<dbReference type="EMDB" id="EMD-6757"/>
<dbReference type="EMDB" id="EMD-7774"/>
<dbReference type="EMDB" id="EMD-8435"/>
<dbReference type="EMDB" id="EMD-8454"/>
<dbReference type="EMDB" id="EMD-9604"/>
<dbReference type="SMR" id="P01633"/>
<dbReference type="FunCoup" id="P01633">
    <property type="interactions" value="544"/>
</dbReference>
<dbReference type="PeptideAtlas" id="P01633"/>
<dbReference type="ProteomicsDB" id="263683"/>
<dbReference type="AGR" id="MGI:1330833"/>
<dbReference type="MGI" id="MGI:1330833">
    <property type="gene designation" value="Igkv6-17"/>
</dbReference>
<dbReference type="InParanoid" id="P01633"/>
<dbReference type="PhylomeDB" id="P01633"/>
<dbReference type="ChiTaRS" id="Igkv6-17">
    <property type="organism name" value="mouse"/>
</dbReference>
<dbReference type="PRO" id="PR:P01633"/>
<dbReference type="Proteomes" id="UP000000589">
    <property type="component" value="Unplaced"/>
</dbReference>
<dbReference type="RNAct" id="P01633">
    <property type="molecule type" value="protein"/>
</dbReference>
<dbReference type="GO" id="GO:0019814">
    <property type="term" value="C:immunoglobulin complex"/>
    <property type="evidence" value="ECO:0007669"/>
    <property type="project" value="UniProtKB-KW"/>
</dbReference>
<dbReference type="GO" id="GO:0005886">
    <property type="term" value="C:plasma membrane"/>
    <property type="evidence" value="ECO:0000304"/>
    <property type="project" value="Reactome"/>
</dbReference>
<dbReference type="GO" id="GO:0002250">
    <property type="term" value="P:adaptive immune response"/>
    <property type="evidence" value="ECO:0007669"/>
    <property type="project" value="UniProtKB-KW"/>
</dbReference>
<dbReference type="CDD" id="cd04980">
    <property type="entry name" value="IgV_L_kappa"/>
    <property type="match status" value="1"/>
</dbReference>
<dbReference type="FunFam" id="2.60.40.10:FF:001827">
    <property type="entry name" value="Immunoglobulin kappa variable 4-1"/>
    <property type="match status" value="1"/>
</dbReference>
<dbReference type="Gene3D" id="2.60.40.10">
    <property type="entry name" value="Immunoglobulins"/>
    <property type="match status" value="1"/>
</dbReference>
<dbReference type="InterPro" id="IPR007110">
    <property type="entry name" value="Ig-like_dom"/>
</dbReference>
<dbReference type="InterPro" id="IPR036179">
    <property type="entry name" value="Ig-like_dom_sf"/>
</dbReference>
<dbReference type="InterPro" id="IPR013783">
    <property type="entry name" value="Ig-like_fold"/>
</dbReference>
<dbReference type="InterPro" id="IPR003599">
    <property type="entry name" value="Ig_sub"/>
</dbReference>
<dbReference type="InterPro" id="IPR013106">
    <property type="entry name" value="Ig_V-set"/>
</dbReference>
<dbReference type="InterPro" id="IPR050150">
    <property type="entry name" value="IgV_Light_Chain"/>
</dbReference>
<dbReference type="PANTHER" id="PTHR23267">
    <property type="entry name" value="IMMUNOGLOBULIN LIGHT CHAIN"/>
    <property type="match status" value="1"/>
</dbReference>
<dbReference type="Pfam" id="PF07686">
    <property type="entry name" value="V-set"/>
    <property type="match status" value="1"/>
</dbReference>
<dbReference type="SMART" id="SM00409">
    <property type="entry name" value="IG"/>
    <property type="match status" value="1"/>
</dbReference>
<dbReference type="SMART" id="SM00406">
    <property type="entry name" value="IGv"/>
    <property type="match status" value="1"/>
</dbReference>
<dbReference type="SUPFAM" id="SSF48726">
    <property type="entry name" value="Immunoglobulin"/>
    <property type="match status" value="1"/>
</dbReference>
<dbReference type="PROSITE" id="PS50835">
    <property type="entry name" value="IG_LIKE"/>
    <property type="match status" value="1"/>
</dbReference>
<protein>
    <recommendedName>
        <fullName evidence="3">Immunoglobulin kappa chain variable 6-17</fullName>
    </recommendedName>
    <alternativeName>
        <fullName>Ig kappa chain V-V region MPC11</fullName>
    </alternativeName>
    <alternativeName>
        <fullName>Ig kappa chain V19-17</fullName>
    </alternativeName>
</protein>
<name>KV5A1_MOUSE</name>
<keyword id="KW-1064">Adaptive immunity</keyword>
<keyword id="KW-0903">Direct protein sequencing</keyword>
<keyword id="KW-0391">Immunity</keyword>
<keyword id="KW-1280">Immunoglobulin</keyword>
<keyword id="KW-1185">Reference proteome</keyword>
<keyword id="KW-0677">Repeat</keyword>
<keyword id="KW-0732">Signal</keyword>